<accession>P0CY47</accession>
<accession>P07057</accession>
<accession>P08502</accession>
<gene>
    <name type="primary">petB</name>
    <name type="synonym">cytB</name>
</gene>
<organism>
    <name type="scientific">Rhodobacter capsulatus</name>
    <name type="common">Rhodopseudomonas capsulata</name>
    <dbReference type="NCBI Taxonomy" id="1061"/>
    <lineage>
        <taxon>Bacteria</taxon>
        <taxon>Pseudomonadati</taxon>
        <taxon>Pseudomonadota</taxon>
        <taxon>Alphaproteobacteria</taxon>
        <taxon>Rhodobacterales</taxon>
        <taxon>Rhodobacter group</taxon>
        <taxon>Rhodobacter</taxon>
    </lineage>
</organism>
<sequence length="437" mass="49324">MSGIPHDHYEPKTGIEKWLHDRLPIVGLVYDTIMIPTPKNLNWWWIWGIVLAFTLVLQIVTGIVLAIDYTPHVDLAFASVEHIMRDVNGGWAMRYIHANGASLFFLAVYIHIFRGLYYGSYKAPREITWIVGMVIYLLMMGTAFMGYVLPWGQMSFWGATVITGLFGAIPGIGPSIQAWLLGGPAVDNATLNRFFSLHYLLPFVIAALVAIHIWAFHTTGNNNPTGVEVRRTSKADAEKDTLPFWPYFVIKDLFALALVLLGFFAVVAYMPNYLGHPDNYIQANPLSTPAHIVPEWYFLPFYAILRAFAADVWVVILVDGLTFGIVDAKFFGVIAMFGAIAVMALAPWLDTSKVRSGAYRPKFRMWFWFLVLDFVVLTWVGAMPTEYPYDWISLIASTYWFAYFLVILPLLGATEKPEPIPASIEEDFNSHYGNPAE</sequence>
<proteinExistence type="evidence at protein level"/>
<protein>
    <recommendedName>
        <fullName>Cytochrome b</fullName>
    </recommendedName>
</protein>
<comment type="function">
    <text evidence="1">Component of the ubiquinol-cytochrome c reductase complex (complex III or cytochrome b-c1 complex), which is a respiratory chain that generates an electrochemical potential coupled to ATP synthesis.</text>
</comment>
<comment type="cofactor">
    <cofactor evidence="1">
        <name>heme b</name>
        <dbReference type="ChEBI" id="CHEBI:60344"/>
    </cofactor>
    <text evidence="1">Binds 2 heme b groups non-covalently.</text>
</comment>
<comment type="subunit">
    <text evidence="1">The main subunits of complex b-c1 are: cytochrome b, cytochrome c1 and the Rieske protein.</text>
</comment>
<comment type="subcellular location">
    <subcellularLocation>
        <location evidence="5">Cell membrane</location>
        <topology evidence="5">Multi-pass membrane protein</topology>
    </subcellularLocation>
</comment>
<comment type="miscellaneous">
    <text evidence="1">Heme 1 (or BL or b562) is low-potential and absorbs at about 562 nm, and heme 2 (or BH or b566) is high-potential and absorbs at about 566 nm.</text>
</comment>
<comment type="similarity">
    <text evidence="3 4">Belongs to the cytochrome b family.</text>
</comment>
<name>CYB_RHOCA</name>
<evidence type="ECO:0000250" key="1"/>
<evidence type="ECO:0000255" key="2"/>
<evidence type="ECO:0000255" key="3">
    <source>
        <dbReference type="PROSITE-ProRule" id="PRU00967"/>
    </source>
</evidence>
<evidence type="ECO:0000255" key="4">
    <source>
        <dbReference type="PROSITE-ProRule" id="PRU00968"/>
    </source>
</evidence>
<evidence type="ECO:0000305" key="5"/>
<evidence type="ECO:0007829" key="6">
    <source>
        <dbReference type="PDB" id="1ZRT"/>
    </source>
</evidence>
<dbReference type="EMBL" id="X03476">
    <property type="protein sequence ID" value="CAA27195.1"/>
    <property type="molecule type" value="Genomic_DNA"/>
</dbReference>
<dbReference type="PIR" id="B29336">
    <property type="entry name" value="B29336"/>
</dbReference>
<dbReference type="PDB" id="1ZRT">
    <property type="method" value="X-ray"/>
    <property type="resolution" value="3.50 A"/>
    <property type="chains" value="C/P=1-437"/>
</dbReference>
<dbReference type="PDBsum" id="1ZRT"/>
<dbReference type="SMR" id="P0CY47"/>
<dbReference type="TCDB" id="3.D.3.1.2">
    <property type="family name" value="the proton-translocating quinol:cytochrome c reductase (qcr) superfamily"/>
</dbReference>
<dbReference type="EvolutionaryTrace" id="P0CY47"/>
<dbReference type="GO" id="GO:0005886">
    <property type="term" value="C:plasma membrane"/>
    <property type="evidence" value="ECO:0007669"/>
    <property type="project" value="UniProtKB-SubCell"/>
</dbReference>
<dbReference type="GO" id="GO:0045275">
    <property type="term" value="C:respiratory chain complex III"/>
    <property type="evidence" value="ECO:0007669"/>
    <property type="project" value="InterPro"/>
</dbReference>
<dbReference type="GO" id="GO:0046872">
    <property type="term" value="F:metal ion binding"/>
    <property type="evidence" value="ECO:0007669"/>
    <property type="project" value="UniProtKB-KW"/>
</dbReference>
<dbReference type="GO" id="GO:0008121">
    <property type="term" value="F:ubiquinol-cytochrome-c reductase activity"/>
    <property type="evidence" value="ECO:0007669"/>
    <property type="project" value="InterPro"/>
</dbReference>
<dbReference type="GO" id="GO:0022904">
    <property type="term" value="P:respiratory electron transport chain"/>
    <property type="evidence" value="ECO:0007669"/>
    <property type="project" value="InterPro"/>
</dbReference>
<dbReference type="CDD" id="cd00290">
    <property type="entry name" value="cytochrome_b_C"/>
    <property type="match status" value="1"/>
</dbReference>
<dbReference type="CDD" id="cd00284">
    <property type="entry name" value="Cytochrome_b_N"/>
    <property type="match status" value="1"/>
</dbReference>
<dbReference type="FunFam" id="1.20.810.10:FF:000010">
    <property type="entry name" value="Cytochrome b"/>
    <property type="match status" value="1"/>
</dbReference>
<dbReference type="Gene3D" id="1.20.810.10">
    <property type="entry name" value="Cytochrome Bc1 Complex, Chain C"/>
    <property type="match status" value="1"/>
</dbReference>
<dbReference type="InterPro" id="IPR005798">
    <property type="entry name" value="Cyt_b/b6_C"/>
</dbReference>
<dbReference type="InterPro" id="IPR036150">
    <property type="entry name" value="Cyt_b/b6_C_sf"/>
</dbReference>
<dbReference type="InterPro" id="IPR005797">
    <property type="entry name" value="Cyt_b/b6_N"/>
</dbReference>
<dbReference type="InterPro" id="IPR027387">
    <property type="entry name" value="Cytb/b6-like_sf"/>
</dbReference>
<dbReference type="InterPro" id="IPR030689">
    <property type="entry name" value="Cytochrome_b"/>
</dbReference>
<dbReference type="InterPro" id="IPR048260">
    <property type="entry name" value="Cytochrome_b_C_euk/bac"/>
</dbReference>
<dbReference type="InterPro" id="IPR048259">
    <property type="entry name" value="Cytochrome_b_N_euk/bac"/>
</dbReference>
<dbReference type="InterPro" id="IPR016174">
    <property type="entry name" value="Di-haem_cyt_TM"/>
</dbReference>
<dbReference type="PANTHER" id="PTHR19271">
    <property type="entry name" value="CYTOCHROME B"/>
    <property type="match status" value="1"/>
</dbReference>
<dbReference type="PANTHER" id="PTHR19271:SF16">
    <property type="entry name" value="CYTOCHROME B"/>
    <property type="match status" value="1"/>
</dbReference>
<dbReference type="Pfam" id="PF00032">
    <property type="entry name" value="Cytochrom_B_C"/>
    <property type="match status" value="1"/>
</dbReference>
<dbReference type="Pfam" id="PF00033">
    <property type="entry name" value="Cytochrome_B"/>
    <property type="match status" value="1"/>
</dbReference>
<dbReference type="PIRSF" id="PIRSF038885">
    <property type="entry name" value="COB"/>
    <property type="match status" value="1"/>
</dbReference>
<dbReference type="SUPFAM" id="SSF81648">
    <property type="entry name" value="a domain/subunit of cytochrome bc1 complex (Ubiquinol-cytochrome c reductase)"/>
    <property type="match status" value="1"/>
</dbReference>
<dbReference type="SUPFAM" id="SSF81342">
    <property type="entry name" value="Transmembrane di-heme cytochromes"/>
    <property type="match status" value="1"/>
</dbReference>
<dbReference type="PROSITE" id="PS51003">
    <property type="entry name" value="CYTB_CTER"/>
    <property type="match status" value="1"/>
</dbReference>
<dbReference type="PROSITE" id="PS51002">
    <property type="entry name" value="CYTB_NTER"/>
    <property type="match status" value="1"/>
</dbReference>
<keyword id="KW-0002">3D-structure</keyword>
<keyword id="KW-1003">Cell membrane</keyword>
<keyword id="KW-0249">Electron transport</keyword>
<keyword id="KW-0349">Heme</keyword>
<keyword id="KW-0408">Iron</keyword>
<keyword id="KW-0472">Membrane</keyword>
<keyword id="KW-0479">Metal-binding</keyword>
<keyword id="KW-0679">Respiratory chain</keyword>
<keyword id="KW-0812">Transmembrane</keyword>
<keyword id="KW-1133">Transmembrane helix</keyword>
<keyword id="KW-0813">Transport</keyword>
<feature type="initiator methionine" description="Removed">
    <location>
        <position position="1"/>
    </location>
</feature>
<feature type="chain" id="PRO_0000061772" description="Cytochrome b">
    <location>
        <begin position="2"/>
        <end position="437"/>
    </location>
</feature>
<feature type="transmembrane region" description="Helical" evidence="2">
    <location>
        <begin position="45"/>
        <end position="65"/>
    </location>
</feature>
<feature type="transmembrane region" description="Helical" evidence="2">
    <location>
        <begin position="100"/>
        <end position="120"/>
    </location>
</feature>
<feature type="transmembrane region" description="Helical" evidence="2">
    <location>
        <begin position="129"/>
        <end position="149"/>
    </location>
</feature>
<feature type="transmembrane region" description="Helical" evidence="2">
    <location>
        <begin position="156"/>
        <end position="176"/>
    </location>
</feature>
<feature type="transmembrane region" description="Helical" evidence="2">
    <location>
        <begin position="194"/>
        <end position="214"/>
    </location>
</feature>
<feature type="transmembrane region" description="Helical" evidence="2">
    <location>
        <begin position="248"/>
        <end position="268"/>
    </location>
</feature>
<feature type="transmembrane region" description="Helical" evidence="2">
    <location>
        <begin position="298"/>
        <end position="318"/>
    </location>
</feature>
<feature type="transmembrane region" description="Helical" evidence="2">
    <location>
        <begin position="330"/>
        <end position="350"/>
    </location>
</feature>
<feature type="transmembrane region" description="Helical" evidence="2">
    <location>
        <begin position="365"/>
        <end position="385"/>
    </location>
</feature>
<feature type="transmembrane region" description="Helical" evidence="2">
    <location>
        <begin position="391"/>
        <end position="411"/>
    </location>
</feature>
<feature type="binding site" description="axial binding residue">
    <location>
        <position position="97"/>
    </location>
    <ligand>
        <name>heme b</name>
        <dbReference type="ChEBI" id="CHEBI:60344"/>
        <label>b562</label>
    </ligand>
    <ligandPart>
        <name>Fe</name>
        <dbReference type="ChEBI" id="CHEBI:18248"/>
    </ligandPart>
</feature>
<feature type="binding site" description="axial binding residue">
    <location>
        <position position="111"/>
    </location>
    <ligand>
        <name>heme b</name>
        <dbReference type="ChEBI" id="CHEBI:60344"/>
        <label>b566</label>
    </ligand>
    <ligandPart>
        <name>Fe</name>
        <dbReference type="ChEBI" id="CHEBI:18248"/>
    </ligandPart>
</feature>
<feature type="binding site" description="axial binding residue">
    <location>
        <position position="198"/>
    </location>
    <ligand>
        <name>heme b</name>
        <dbReference type="ChEBI" id="CHEBI:60344"/>
        <label>b562</label>
    </ligand>
    <ligandPart>
        <name>Fe</name>
        <dbReference type="ChEBI" id="CHEBI:18248"/>
    </ligandPart>
</feature>
<feature type="binding site" description="axial binding residue">
    <location>
        <position position="212"/>
    </location>
    <ligand>
        <name>heme b</name>
        <dbReference type="ChEBI" id="CHEBI:60344"/>
        <label>b566</label>
    </ligand>
    <ligandPart>
        <name>Fe</name>
        <dbReference type="ChEBI" id="CHEBI:18248"/>
    </ligandPart>
</feature>
<feature type="helix" evidence="6">
    <location>
        <begin position="14"/>
        <end position="18"/>
    </location>
</feature>
<feature type="helix" evidence="6">
    <location>
        <begin position="25"/>
        <end position="32"/>
    </location>
</feature>
<feature type="helix" evidence="6">
    <location>
        <begin position="43"/>
        <end position="46"/>
    </location>
</feature>
<feature type="helix" evidence="6">
    <location>
        <begin position="47"/>
        <end position="66"/>
    </location>
</feature>
<feature type="turn" evidence="6">
    <location>
        <begin position="73"/>
        <end position="75"/>
    </location>
</feature>
<feature type="helix" evidence="6">
    <location>
        <begin position="76"/>
        <end position="86"/>
    </location>
</feature>
<feature type="helix" evidence="6">
    <location>
        <begin position="90"/>
        <end position="117"/>
    </location>
</feature>
<feature type="strand" evidence="6">
    <location>
        <begin position="118"/>
        <end position="122"/>
    </location>
</feature>
<feature type="helix" evidence="6">
    <location>
        <begin position="126"/>
        <end position="147"/>
    </location>
</feature>
<feature type="turn" evidence="6">
    <location>
        <begin position="148"/>
        <end position="150"/>
    </location>
</feature>
<feature type="helix" evidence="6">
    <location>
        <begin position="153"/>
        <end position="167"/>
    </location>
</feature>
<feature type="helix" evidence="6">
    <location>
        <begin position="172"/>
        <end position="181"/>
    </location>
</feature>
<feature type="strand" evidence="6">
    <location>
        <begin position="183"/>
        <end position="187"/>
    </location>
</feature>
<feature type="helix" evidence="6">
    <location>
        <begin position="188"/>
        <end position="219"/>
    </location>
</feature>
<feature type="turn" evidence="6">
    <location>
        <begin position="229"/>
        <end position="232"/>
    </location>
</feature>
<feature type="turn" evidence="6">
    <location>
        <begin position="244"/>
        <end position="246"/>
    </location>
</feature>
<feature type="helix" evidence="6">
    <location>
        <begin position="247"/>
        <end position="269"/>
    </location>
</feature>
<feature type="strand" evidence="6">
    <location>
        <begin position="273"/>
        <end position="275"/>
    </location>
</feature>
<feature type="helix" evidence="6">
    <location>
        <begin position="277"/>
        <end position="280"/>
    </location>
</feature>
<feature type="helix" evidence="6">
    <location>
        <begin position="299"/>
        <end position="307"/>
    </location>
</feature>
<feature type="helix" evidence="6">
    <location>
        <begin position="316"/>
        <end position="319"/>
    </location>
</feature>
<feature type="helix" evidence="6">
    <location>
        <begin position="320"/>
        <end position="322"/>
    </location>
</feature>
<feature type="helix" evidence="6">
    <location>
        <begin position="329"/>
        <end position="349"/>
    </location>
</feature>
<feature type="helix" evidence="6">
    <location>
        <begin position="357"/>
        <end position="359"/>
    </location>
</feature>
<feature type="helix" evidence="6">
    <location>
        <begin position="361"/>
        <end position="380"/>
    </location>
</feature>
<feature type="helix" evidence="6">
    <location>
        <begin position="389"/>
        <end position="405"/>
    </location>
</feature>
<feature type="helix" evidence="6">
    <location>
        <begin position="407"/>
        <end position="415"/>
    </location>
</feature>
<reference key="1">
    <citation type="journal article" date="1986" name="Eur. J. Biochem.">
        <title>Nucleotide sequence and transcription of the fbc operon from Rhodopseudomonas sphaeroides. Evaluation of the deduced amino acid sequences of the FeS protein, cytochrome b and cytochrome c1.</title>
        <authorList>
            <person name="Gabellini N."/>
            <person name="Sebald W."/>
        </authorList>
    </citation>
    <scope>NUCLEOTIDE SEQUENCE [GENOMIC DNA]</scope>
    <source>
        <strain>GA</strain>
    </source>
</reference>
<reference key="2">
    <citation type="journal article" date="1987" name="J. Mol. Biol.">
        <title>fbc operon, encoding the Rieske Fe-S protein cytochrome b, and cytochrome c1 apoproteins previously described from Rhodopseudomonas sphaeroides, is from Rhodopseudomonas capsulata.</title>
        <authorList>
            <person name="Davidson E."/>
            <person name="Daldal F."/>
        </authorList>
    </citation>
    <scope>SHOWS THAT SEQUENCE DESCRIBED IN PUBMED:3004982 ORIGINATES FROM RHODOBACTER CAPSULATUS</scope>
</reference>
<reference key="3">
    <citation type="journal article" date="1989" name="EMBO J.">
        <title>Mutations conferring resistance to quinol oxidation (Qz) inhibitors of the cyt bc1 complex of Rhodobacter capsulatus.</title>
        <authorList>
            <person name="Daldal F."/>
            <person name="Tokito M.K."/>
            <person name="Davidson E."/>
            <person name="Faham M."/>
        </authorList>
    </citation>
    <scope>MUTATIONS CONFERRING RESISTANCE TO QUINOL OXIDATION INHIBITORS</scope>
</reference>